<accession>A9VTL9</accession>
<reference key="1">
    <citation type="journal article" date="2008" name="Chem. Biol. Interact.">
        <title>Extending the Bacillus cereus group genomics to putative food-borne pathogens of different toxicity.</title>
        <authorList>
            <person name="Lapidus A."/>
            <person name="Goltsman E."/>
            <person name="Auger S."/>
            <person name="Galleron N."/>
            <person name="Segurens B."/>
            <person name="Dossat C."/>
            <person name="Land M.L."/>
            <person name="Broussolle V."/>
            <person name="Brillard J."/>
            <person name="Guinebretiere M.-H."/>
            <person name="Sanchis V."/>
            <person name="Nguen-the C."/>
            <person name="Lereclus D."/>
            <person name="Richardson P."/>
            <person name="Wincker P."/>
            <person name="Weissenbach J."/>
            <person name="Ehrlich S.D."/>
            <person name="Sorokin A."/>
        </authorList>
    </citation>
    <scope>NUCLEOTIDE SEQUENCE [LARGE SCALE GENOMIC DNA]</scope>
    <source>
        <strain>KBAB4</strain>
    </source>
</reference>
<feature type="chain" id="PRO_0000345241" description="tRNA uridine 5-carboxymethylaminomethyl modification enzyme MnmG">
    <location>
        <begin position="1"/>
        <end position="629"/>
    </location>
</feature>
<feature type="binding site" evidence="1">
    <location>
        <begin position="14"/>
        <end position="19"/>
    </location>
    <ligand>
        <name>FAD</name>
        <dbReference type="ChEBI" id="CHEBI:57692"/>
    </ligand>
</feature>
<feature type="binding site" evidence="1">
    <location>
        <position position="126"/>
    </location>
    <ligand>
        <name>FAD</name>
        <dbReference type="ChEBI" id="CHEBI:57692"/>
    </ligand>
</feature>
<feature type="binding site" evidence="1">
    <location>
        <position position="181"/>
    </location>
    <ligand>
        <name>FAD</name>
        <dbReference type="ChEBI" id="CHEBI:57692"/>
    </ligand>
</feature>
<feature type="binding site" evidence="1">
    <location>
        <begin position="273"/>
        <end position="287"/>
    </location>
    <ligand>
        <name>NAD(+)</name>
        <dbReference type="ChEBI" id="CHEBI:57540"/>
    </ligand>
</feature>
<feature type="binding site" evidence="1">
    <location>
        <position position="370"/>
    </location>
    <ligand>
        <name>FAD</name>
        <dbReference type="ChEBI" id="CHEBI:57692"/>
    </ligand>
</feature>
<protein>
    <recommendedName>
        <fullName evidence="1">tRNA uridine 5-carboxymethylaminomethyl modification enzyme MnmG</fullName>
    </recommendedName>
    <alternativeName>
        <fullName evidence="1">Glucose-inhibited division protein A</fullName>
    </alternativeName>
</protein>
<evidence type="ECO:0000255" key="1">
    <source>
        <dbReference type="HAMAP-Rule" id="MF_00129"/>
    </source>
</evidence>
<comment type="function">
    <text evidence="1">NAD-binding protein involved in the addition of a carboxymethylaminomethyl (cmnm) group at the wobble position (U34) of certain tRNAs, forming tRNA-cmnm(5)s(2)U34.</text>
</comment>
<comment type="cofactor">
    <cofactor evidence="1">
        <name>FAD</name>
        <dbReference type="ChEBI" id="CHEBI:57692"/>
    </cofactor>
</comment>
<comment type="subunit">
    <text evidence="1">Homodimer. Heterotetramer of two MnmE and two MnmG subunits.</text>
</comment>
<comment type="subcellular location">
    <subcellularLocation>
        <location evidence="1">Cytoplasm</location>
    </subcellularLocation>
</comment>
<comment type="similarity">
    <text evidence="1">Belongs to the MnmG family.</text>
</comment>
<gene>
    <name evidence="1" type="primary">mnmG</name>
    <name evidence="1" type="synonym">gidA</name>
    <name type="ordered locus">BcerKBAB4_5276</name>
</gene>
<organism>
    <name type="scientific">Bacillus mycoides (strain KBAB4)</name>
    <name type="common">Bacillus weihenstephanensis</name>
    <dbReference type="NCBI Taxonomy" id="315730"/>
    <lineage>
        <taxon>Bacteria</taxon>
        <taxon>Bacillati</taxon>
        <taxon>Bacillota</taxon>
        <taxon>Bacilli</taxon>
        <taxon>Bacillales</taxon>
        <taxon>Bacillaceae</taxon>
        <taxon>Bacillus</taxon>
        <taxon>Bacillus cereus group</taxon>
    </lineage>
</organism>
<keyword id="KW-0963">Cytoplasm</keyword>
<keyword id="KW-0274">FAD</keyword>
<keyword id="KW-0285">Flavoprotein</keyword>
<keyword id="KW-0520">NAD</keyword>
<keyword id="KW-0819">tRNA processing</keyword>
<dbReference type="EMBL" id="CP000903">
    <property type="protein sequence ID" value="ABY46419.1"/>
    <property type="molecule type" value="Genomic_DNA"/>
</dbReference>
<dbReference type="RefSeq" id="WP_002016474.1">
    <property type="nucleotide sequence ID" value="NC_010184.1"/>
</dbReference>
<dbReference type="SMR" id="A9VTL9"/>
<dbReference type="GeneID" id="66264960"/>
<dbReference type="KEGG" id="bwe:BcerKBAB4_5276"/>
<dbReference type="eggNOG" id="COG0445">
    <property type="taxonomic scope" value="Bacteria"/>
</dbReference>
<dbReference type="HOGENOM" id="CLU_007831_2_2_9"/>
<dbReference type="Proteomes" id="UP000002154">
    <property type="component" value="Chromosome"/>
</dbReference>
<dbReference type="GO" id="GO:0005829">
    <property type="term" value="C:cytosol"/>
    <property type="evidence" value="ECO:0007669"/>
    <property type="project" value="TreeGrafter"/>
</dbReference>
<dbReference type="GO" id="GO:0050660">
    <property type="term" value="F:flavin adenine dinucleotide binding"/>
    <property type="evidence" value="ECO:0007669"/>
    <property type="project" value="UniProtKB-UniRule"/>
</dbReference>
<dbReference type="GO" id="GO:0030488">
    <property type="term" value="P:tRNA methylation"/>
    <property type="evidence" value="ECO:0007669"/>
    <property type="project" value="TreeGrafter"/>
</dbReference>
<dbReference type="GO" id="GO:0002098">
    <property type="term" value="P:tRNA wobble uridine modification"/>
    <property type="evidence" value="ECO:0007669"/>
    <property type="project" value="InterPro"/>
</dbReference>
<dbReference type="FunFam" id="1.10.10.1800:FF:000001">
    <property type="entry name" value="tRNA uridine 5-carboxymethylaminomethyl modification enzyme MnmG"/>
    <property type="match status" value="1"/>
</dbReference>
<dbReference type="FunFam" id="1.10.150.570:FF:000001">
    <property type="entry name" value="tRNA uridine 5-carboxymethylaminomethyl modification enzyme MnmG"/>
    <property type="match status" value="1"/>
</dbReference>
<dbReference type="FunFam" id="3.50.50.60:FF:000002">
    <property type="entry name" value="tRNA uridine 5-carboxymethylaminomethyl modification enzyme MnmG"/>
    <property type="match status" value="1"/>
</dbReference>
<dbReference type="FunFam" id="3.50.50.60:FF:000063">
    <property type="entry name" value="tRNA uridine 5-carboxymethylaminomethyl modification enzyme MnmG"/>
    <property type="match status" value="1"/>
</dbReference>
<dbReference type="Gene3D" id="3.50.50.60">
    <property type="entry name" value="FAD/NAD(P)-binding domain"/>
    <property type="match status" value="2"/>
</dbReference>
<dbReference type="Gene3D" id="1.10.150.570">
    <property type="entry name" value="GidA associated domain, C-terminal subdomain"/>
    <property type="match status" value="1"/>
</dbReference>
<dbReference type="Gene3D" id="1.10.10.1800">
    <property type="entry name" value="tRNA uridine 5-carboxymethylaminomethyl modification enzyme MnmG/GidA"/>
    <property type="match status" value="1"/>
</dbReference>
<dbReference type="HAMAP" id="MF_00129">
    <property type="entry name" value="MnmG_GidA"/>
    <property type="match status" value="1"/>
</dbReference>
<dbReference type="InterPro" id="IPR036188">
    <property type="entry name" value="FAD/NAD-bd_sf"/>
</dbReference>
<dbReference type="InterPro" id="IPR049312">
    <property type="entry name" value="GIDA_C_N"/>
</dbReference>
<dbReference type="InterPro" id="IPR004416">
    <property type="entry name" value="MnmG"/>
</dbReference>
<dbReference type="InterPro" id="IPR002218">
    <property type="entry name" value="MnmG-rel"/>
</dbReference>
<dbReference type="InterPro" id="IPR020595">
    <property type="entry name" value="MnmG-rel_CS"/>
</dbReference>
<dbReference type="InterPro" id="IPR026904">
    <property type="entry name" value="MnmG_C"/>
</dbReference>
<dbReference type="InterPro" id="IPR047001">
    <property type="entry name" value="MnmG_C_subdom"/>
</dbReference>
<dbReference type="InterPro" id="IPR044920">
    <property type="entry name" value="MnmG_C_subdom_sf"/>
</dbReference>
<dbReference type="InterPro" id="IPR040131">
    <property type="entry name" value="MnmG_N"/>
</dbReference>
<dbReference type="NCBIfam" id="TIGR00136">
    <property type="entry name" value="mnmG_gidA"/>
    <property type="match status" value="1"/>
</dbReference>
<dbReference type="PANTHER" id="PTHR11806">
    <property type="entry name" value="GLUCOSE INHIBITED DIVISION PROTEIN A"/>
    <property type="match status" value="1"/>
</dbReference>
<dbReference type="PANTHER" id="PTHR11806:SF0">
    <property type="entry name" value="PROTEIN MTO1 HOMOLOG, MITOCHONDRIAL"/>
    <property type="match status" value="1"/>
</dbReference>
<dbReference type="Pfam" id="PF01134">
    <property type="entry name" value="GIDA"/>
    <property type="match status" value="1"/>
</dbReference>
<dbReference type="Pfam" id="PF21680">
    <property type="entry name" value="GIDA_C_1st"/>
    <property type="match status" value="1"/>
</dbReference>
<dbReference type="Pfam" id="PF13932">
    <property type="entry name" value="SAM_GIDA_C"/>
    <property type="match status" value="1"/>
</dbReference>
<dbReference type="PRINTS" id="PR00411">
    <property type="entry name" value="PNDRDTASEI"/>
</dbReference>
<dbReference type="SMART" id="SM01228">
    <property type="entry name" value="GIDA_assoc_3"/>
    <property type="match status" value="1"/>
</dbReference>
<dbReference type="SUPFAM" id="SSF51905">
    <property type="entry name" value="FAD/NAD(P)-binding domain"/>
    <property type="match status" value="1"/>
</dbReference>
<dbReference type="PROSITE" id="PS01280">
    <property type="entry name" value="GIDA_1"/>
    <property type="match status" value="1"/>
</dbReference>
<dbReference type="PROSITE" id="PS01281">
    <property type="entry name" value="GIDA_2"/>
    <property type="match status" value="1"/>
</dbReference>
<sequence length="629" mass="70164">MGYNAGSYDVIVIGAGHAGCEAGLAAARMGSKTLMLTINLDMVAFMPCNPSVGGPAKGIVVREIDALGGEMGRNIDKTHIQMRMLNTGKGPAVRALRAQADKFSYQHELKKTIEETPNLTLFQGLVERLIIEDGVCKGVITQAGAEYTAKTVVITTGTFLRGEIIMGDLKYSSGPNNQQPSITLSEHLEELGFDLVRFKTGTPPRVNSNTIDYSKTEIQPGDDKPRAFSFETTKFIMDQIPCWLTYTSTETHRLIDENLHRSAMYSGMIKGTGPRYCPSIEDKVVRFNDKPRHQIFLEPEGRNTQEVYVQGLSTSLPEDVQRAMLRTIPGLENVEMMRTGYAIEYDAIVPTQLWPTLETKKIKNLYTAGQINGTSGYEEAAGQGLMAGINAACRSLGKKEVILGRADAYIGVLIDDLVTKGTNEPYRLLTSRAEYRLLLRHDNADLRLTEVGREIGLIKEDRYERFTNKKLQIEQEKERLESIFIKPRPEVQELIRSIGGSELKDGIRASDLLRRPEVTYEHIHLLVPSEVALSDEITEQVEIQTKYEGYIEKSLQQVERMKKMENKKIPVDIDYDAISSLASEARQKLKDVRPLSMGQASRISGVNPADVSILLIYIEQGKIARVSNQ</sequence>
<name>MNMG_BACMK</name>
<proteinExistence type="inferred from homology"/>